<organism>
    <name type="scientific">Drosophila melanogaster</name>
    <name type="common">Fruit fly</name>
    <dbReference type="NCBI Taxonomy" id="7227"/>
    <lineage>
        <taxon>Eukaryota</taxon>
        <taxon>Metazoa</taxon>
        <taxon>Ecdysozoa</taxon>
        <taxon>Arthropoda</taxon>
        <taxon>Hexapoda</taxon>
        <taxon>Insecta</taxon>
        <taxon>Pterygota</taxon>
        <taxon>Neoptera</taxon>
        <taxon>Endopterygota</taxon>
        <taxon>Diptera</taxon>
        <taxon>Brachycera</taxon>
        <taxon>Muscomorpha</taxon>
        <taxon>Ephydroidea</taxon>
        <taxon>Drosophilidae</taxon>
        <taxon>Drosophila</taxon>
        <taxon>Sophophora</taxon>
    </lineage>
</organism>
<comment type="catalytic activity">
    <reaction>
        <text>O-phospho-L-seryl-[protein] + H2O = L-seryl-[protein] + phosphate</text>
        <dbReference type="Rhea" id="RHEA:20629"/>
        <dbReference type="Rhea" id="RHEA-COMP:9863"/>
        <dbReference type="Rhea" id="RHEA-COMP:11604"/>
        <dbReference type="ChEBI" id="CHEBI:15377"/>
        <dbReference type="ChEBI" id="CHEBI:29999"/>
        <dbReference type="ChEBI" id="CHEBI:43474"/>
        <dbReference type="ChEBI" id="CHEBI:83421"/>
        <dbReference type="EC" id="3.1.3.16"/>
    </reaction>
</comment>
<comment type="catalytic activity">
    <reaction>
        <text>O-phospho-L-threonyl-[protein] + H2O = L-threonyl-[protein] + phosphate</text>
        <dbReference type="Rhea" id="RHEA:47004"/>
        <dbReference type="Rhea" id="RHEA-COMP:11060"/>
        <dbReference type="Rhea" id="RHEA-COMP:11605"/>
        <dbReference type="ChEBI" id="CHEBI:15377"/>
        <dbReference type="ChEBI" id="CHEBI:30013"/>
        <dbReference type="ChEBI" id="CHEBI:43474"/>
        <dbReference type="ChEBI" id="CHEBI:61977"/>
        <dbReference type="EC" id="3.1.3.16"/>
    </reaction>
</comment>
<comment type="cofactor">
    <cofactor evidence="1">
        <name>Mn(2+)</name>
        <dbReference type="ChEBI" id="CHEBI:29035"/>
    </cofactor>
    <text evidence="1">Binds 2 manganese ions per subunit.</text>
</comment>
<comment type="subunit">
    <text evidence="3">Interacts with Nop17l.</text>
</comment>
<comment type="interaction">
    <interactant intactId="EBI-91997">
        <id>P48461</id>
    </interactant>
    <interactant intactId="EBI-108894">
        <id>Q9V7W9</id>
        <label>NiPp1</label>
    </interactant>
    <organismsDiffer>false</organismsDiffer>
    <experiments>3</experiments>
</comment>
<comment type="interaction">
    <interactant intactId="EBI-91997">
        <id>P48461</id>
    </interactant>
    <interactant intactId="EBI-150380">
        <id>Q0E9G3</id>
        <label>Nop17l</label>
    </interactant>
    <organismsDiffer>false</organismsDiffer>
    <experiments>4</experiments>
</comment>
<comment type="similarity">
    <text evidence="5">Belongs to the PPP phosphatase family. PP-1 subfamily.</text>
</comment>
<gene>
    <name type="primary">Pp1alpha-96A</name>
    <name type="synonym">Pp1-96A</name>
    <name type="ORF">CG6593</name>
</gene>
<evidence type="ECO:0000250" key="1"/>
<evidence type="ECO:0000256" key="2">
    <source>
        <dbReference type="SAM" id="MobiDB-lite"/>
    </source>
</evidence>
<evidence type="ECO:0000269" key="3">
    <source>
    </source>
</evidence>
<evidence type="ECO:0000269" key="4">
    <source>
    </source>
</evidence>
<evidence type="ECO:0000305" key="5"/>
<reference key="1">
    <citation type="journal article" date="1990" name="Eur. J. Biochem.">
        <title>Drosophila contains three genes that encode distinct isoforms of protein phosphatase 1.</title>
        <authorList>
            <person name="Dombradi V."/>
            <person name="Axton J.M."/>
            <person name="Brewis N.D."/>
            <person name="da Cruz e Silva E.F."/>
            <person name="Alphey L."/>
            <person name="Cohen P.T.W."/>
        </authorList>
    </citation>
    <scope>NUCLEOTIDE SEQUENCE [MRNA]</scope>
    <source>
        <tissue>Embryo</tissue>
    </source>
</reference>
<reference key="2">
    <citation type="journal article" date="2000" name="Science">
        <title>The genome sequence of Drosophila melanogaster.</title>
        <authorList>
            <person name="Adams M.D."/>
            <person name="Celniker S.E."/>
            <person name="Holt R.A."/>
            <person name="Evans C.A."/>
            <person name="Gocayne J.D."/>
            <person name="Amanatides P.G."/>
            <person name="Scherer S.E."/>
            <person name="Li P.W."/>
            <person name="Hoskins R.A."/>
            <person name="Galle R.F."/>
            <person name="George R.A."/>
            <person name="Lewis S.E."/>
            <person name="Richards S."/>
            <person name="Ashburner M."/>
            <person name="Henderson S.N."/>
            <person name="Sutton G.G."/>
            <person name="Wortman J.R."/>
            <person name="Yandell M.D."/>
            <person name="Zhang Q."/>
            <person name="Chen L.X."/>
            <person name="Brandon R.C."/>
            <person name="Rogers Y.-H.C."/>
            <person name="Blazej R.G."/>
            <person name="Champe M."/>
            <person name="Pfeiffer B.D."/>
            <person name="Wan K.H."/>
            <person name="Doyle C."/>
            <person name="Baxter E.G."/>
            <person name="Helt G."/>
            <person name="Nelson C.R."/>
            <person name="Miklos G.L.G."/>
            <person name="Abril J.F."/>
            <person name="Agbayani A."/>
            <person name="An H.-J."/>
            <person name="Andrews-Pfannkoch C."/>
            <person name="Baldwin D."/>
            <person name="Ballew R.M."/>
            <person name="Basu A."/>
            <person name="Baxendale J."/>
            <person name="Bayraktaroglu L."/>
            <person name="Beasley E.M."/>
            <person name="Beeson K.Y."/>
            <person name="Benos P.V."/>
            <person name="Berman B.P."/>
            <person name="Bhandari D."/>
            <person name="Bolshakov S."/>
            <person name="Borkova D."/>
            <person name="Botchan M.R."/>
            <person name="Bouck J."/>
            <person name="Brokstein P."/>
            <person name="Brottier P."/>
            <person name="Burtis K.C."/>
            <person name="Busam D.A."/>
            <person name="Butler H."/>
            <person name="Cadieu E."/>
            <person name="Center A."/>
            <person name="Chandra I."/>
            <person name="Cherry J.M."/>
            <person name="Cawley S."/>
            <person name="Dahlke C."/>
            <person name="Davenport L.B."/>
            <person name="Davies P."/>
            <person name="de Pablos B."/>
            <person name="Delcher A."/>
            <person name="Deng Z."/>
            <person name="Mays A.D."/>
            <person name="Dew I."/>
            <person name="Dietz S.M."/>
            <person name="Dodson K."/>
            <person name="Doup L.E."/>
            <person name="Downes M."/>
            <person name="Dugan-Rocha S."/>
            <person name="Dunkov B.C."/>
            <person name="Dunn P."/>
            <person name="Durbin K.J."/>
            <person name="Evangelista C.C."/>
            <person name="Ferraz C."/>
            <person name="Ferriera S."/>
            <person name="Fleischmann W."/>
            <person name="Fosler C."/>
            <person name="Gabrielian A.E."/>
            <person name="Garg N.S."/>
            <person name="Gelbart W.M."/>
            <person name="Glasser K."/>
            <person name="Glodek A."/>
            <person name="Gong F."/>
            <person name="Gorrell J.H."/>
            <person name="Gu Z."/>
            <person name="Guan P."/>
            <person name="Harris M."/>
            <person name="Harris N.L."/>
            <person name="Harvey D.A."/>
            <person name="Heiman T.J."/>
            <person name="Hernandez J.R."/>
            <person name="Houck J."/>
            <person name="Hostin D."/>
            <person name="Houston K.A."/>
            <person name="Howland T.J."/>
            <person name="Wei M.-H."/>
            <person name="Ibegwam C."/>
            <person name="Jalali M."/>
            <person name="Kalush F."/>
            <person name="Karpen G.H."/>
            <person name="Ke Z."/>
            <person name="Kennison J.A."/>
            <person name="Ketchum K.A."/>
            <person name="Kimmel B.E."/>
            <person name="Kodira C.D."/>
            <person name="Kraft C.L."/>
            <person name="Kravitz S."/>
            <person name="Kulp D."/>
            <person name="Lai Z."/>
            <person name="Lasko P."/>
            <person name="Lei Y."/>
            <person name="Levitsky A.A."/>
            <person name="Li J.H."/>
            <person name="Li Z."/>
            <person name="Liang Y."/>
            <person name="Lin X."/>
            <person name="Liu X."/>
            <person name="Mattei B."/>
            <person name="McIntosh T.C."/>
            <person name="McLeod M.P."/>
            <person name="McPherson D."/>
            <person name="Merkulov G."/>
            <person name="Milshina N.V."/>
            <person name="Mobarry C."/>
            <person name="Morris J."/>
            <person name="Moshrefi A."/>
            <person name="Mount S.M."/>
            <person name="Moy M."/>
            <person name="Murphy B."/>
            <person name="Murphy L."/>
            <person name="Muzny D.M."/>
            <person name="Nelson D.L."/>
            <person name="Nelson D.R."/>
            <person name="Nelson K.A."/>
            <person name="Nixon K."/>
            <person name="Nusskern D.R."/>
            <person name="Pacleb J.M."/>
            <person name="Palazzolo M."/>
            <person name="Pittman G.S."/>
            <person name="Pan S."/>
            <person name="Pollard J."/>
            <person name="Puri V."/>
            <person name="Reese M.G."/>
            <person name="Reinert K."/>
            <person name="Remington K."/>
            <person name="Saunders R.D.C."/>
            <person name="Scheeler F."/>
            <person name="Shen H."/>
            <person name="Shue B.C."/>
            <person name="Siden-Kiamos I."/>
            <person name="Simpson M."/>
            <person name="Skupski M.P."/>
            <person name="Smith T.J."/>
            <person name="Spier E."/>
            <person name="Spradling A.C."/>
            <person name="Stapleton M."/>
            <person name="Strong R."/>
            <person name="Sun E."/>
            <person name="Svirskas R."/>
            <person name="Tector C."/>
            <person name="Turner R."/>
            <person name="Venter E."/>
            <person name="Wang A.H."/>
            <person name="Wang X."/>
            <person name="Wang Z.-Y."/>
            <person name="Wassarman D.A."/>
            <person name="Weinstock G.M."/>
            <person name="Weissenbach J."/>
            <person name="Williams S.M."/>
            <person name="Woodage T."/>
            <person name="Worley K.C."/>
            <person name="Wu D."/>
            <person name="Yang S."/>
            <person name="Yao Q.A."/>
            <person name="Ye J."/>
            <person name="Yeh R.-F."/>
            <person name="Zaveri J.S."/>
            <person name="Zhan M."/>
            <person name="Zhang G."/>
            <person name="Zhao Q."/>
            <person name="Zheng L."/>
            <person name="Zheng X.H."/>
            <person name="Zhong F.N."/>
            <person name="Zhong W."/>
            <person name="Zhou X."/>
            <person name="Zhu S.C."/>
            <person name="Zhu X."/>
            <person name="Smith H.O."/>
            <person name="Gibbs R.A."/>
            <person name="Myers E.W."/>
            <person name="Rubin G.M."/>
            <person name="Venter J.C."/>
        </authorList>
    </citation>
    <scope>NUCLEOTIDE SEQUENCE [LARGE SCALE GENOMIC DNA]</scope>
    <source>
        <strain>Berkeley</strain>
    </source>
</reference>
<reference key="3">
    <citation type="journal article" date="2002" name="Genome Biol.">
        <title>Annotation of the Drosophila melanogaster euchromatic genome: a systematic review.</title>
        <authorList>
            <person name="Misra S."/>
            <person name="Crosby M.A."/>
            <person name="Mungall C.J."/>
            <person name="Matthews B.B."/>
            <person name="Campbell K.S."/>
            <person name="Hradecky P."/>
            <person name="Huang Y."/>
            <person name="Kaminker J.S."/>
            <person name="Millburn G.H."/>
            <person name="Prochnik S.E."/>
            <person name="Smith C.D."/>
            <person name="Tupy J.L."/>
            <person name="Whitfield E.J."/>
            <person name="Bayraktaroglu L."/>
            <person name="Berman B.P."/>
            <person name="Bettencourt B.R."/>
            <person name="Celniker S.E."/>
            <person name="de Grey A.D.N.J."/>
            <person name="Drysdale R.A."/>
            <person name="Harris N.L."/>
            <person name="Richter J."/>
            <person name="Russo S."/>
            <person name="Schroeder A.J."/>
            <person name="Shu S.Q."/>
            <person name="Stapleton M."/>
            <person name="Yamada C."/>
            <person name="Ashburner M."/>
            <person name="Gelbart W.M."/>
            <person name="Rubin G.M."/>
            <person name="Lewis S.E."/>
        </authorList>
    </citation>
    <scope>GENOME REANNOTATION</scope>
    <source>
        <strain>Berkeley</strain>
    </source>
</reference>
<reference key="4">
    <citation type="submission" date="2004-10" db="EMBL/GenBank/DDBJ databases">
        <authorList>
            <person name="Stapleton M."/>
            <person name="Carlson J.W."/>
            <person name="Chavez C."/>
            <person name="Frise E."/>
            <person name="George R.A."/>
            <person name="Pacleb J.M."/>
            <person name="Park S."/>
            <person name="Wan K.H."/>
            <person name="Yu C."/>
            <person name="Rubin G.M."/>
            <person name="Celniker S.E."/>
        </authorList>
    </citation>
    <scope>NUCLEOTIDE SEQUENCE [LARGE SCALE MRNA]</scope>
    <source>
        <strain>Berkeley</strain>
        <tissue>Embryo</tissue>
    </source>
</reference>
<reference key="5">
    <citation type="journal article" date="2006" name="J. Mol. Biol.">
        <title>Towards a comprehensive analysis of the protein phosphatase 1 interactome in Drosophila.</title>
        <authorList>
            <person name="Bennett D."/>
            <person name="Lyulcheva E."/>
            <person name="Alphey L."/>
        </authorList>
    </citation>
    <scope>INTERACTION WITH NOP17L</scope>
</reference>
<reference key="6">
    <citation type="journal article" date="2008" name="J. Proteome Res.">
        <title>Phosphoproteome analysis of Drosophila melanogaster embryos.</title>
        <authorList>
            <person name="Zhai B."/>
            <person name="Villen J."/>
            <person name="Beausoleil S.A."/>
            <person name="Mintseris J."/>
            <person name="Gygi S.P."/>
        </authorList>
    </citation>
    <scope>PHOSPHORYLATION [LARGE SCALE ANALYSIS] AT THR-315</scope>
    <scope>IDENTIFICATION BY MASS SPECTROMETRY</scope>
    <source>
        <tissue>Embryo</tissue>
    </source>
</reference>
<name>PP11_DROME</name>
<protein>
    <recommendedName>
        <fullName>Serine/threonine-protein phosphatase alpha-1 isoform</fullName>
        <ecNumber>3.1.3.16</ecNumber>
    </recommendedName>
</protein>
<proteinExistence type="evidence at protein level"/>
<dbReference type="EC" id="3.1.3.16"/>
<dbReference type="EMBL" id="X56438">
    <property type="protein sequence ID" value="CAA39820.1"/>
    <property type="molecule type" value="mRNA"/>
</dbReference>
<dbReference type="EMBL" id="AE014297">
    <property type="protein sequence ID" value="AAF56306.1"/>
    <property type="molecule type" value="Genomic_DNA"/>
</dbReference>
<dbReference type="EMBL" id="BT016110">
    <property type="protein sequence ID" value="AAV36995.1"/>
    <property type="molecule type" value="mRNA"/>
</dbReference>
<dbReference type="PIR" id="S13827">
    <property type="entry name" value="S13827"/>
</dbReference>
<dbReference type="RefSeq" id="NP_001262919.1">
    <property type="nucleotide sequence ID" value="NM_001275990.1"/>
</dbReference>
<dbReference type="RefSeq" id="NP_524484.1">
    <property type="nucleotide sequence ID" value="NM_079760.3"/>
</dbReference>
<dbReference type="SMR" id="P48461"/>
<dbReference type="BioGRID" id="67848">
    <property type="interactions" value="39"/>
</dbReference>
<dbReference type="DIP" id="DIP-19812N"/>
<dbReference type="FunCoup" id="P48461">
    <property type="interactions" value="2447"/>
</dbReference>
<dbReference type="IntAct" id="P48461">
    <property type="interactions" value="28"/>
</dbReference>
<dbReference type="MINT" id="P48461"/>
<dbReference type="STRING" id="7227.FBpp0306442"/>
<dbReference type="iPTMnet" id="P48461"/>
<dbReference type="PaxDb" id="7227-FBpp0084026"/>
<dbReference type="EnsemblMetazoa" id="FBtr0084642">
    <property type="protein sequence ID" value="FBpp0084026"/>
    <property type="gene ID" value="FBgn0003134"/>
</dbReference>
<dbReference type="EnsemblMetazoa" id="FBtr0334334">
    <property type="protein sequence ID" value="FBpp0306442"/>
    <property type="gene ID" value="FBgn0003134"/>
</dbReference>
<dbReference type="GeneID" id="42922"/>
<dbReference type="KEGG" id="dme:Dmel_CG6593"/>
<dbReference type="AGR" id="FB:FBgn0003134"/>
<dbReference type="CTD" id="42922"/>
<dbReference type="FlyBase" id="FBgn0003134">
    <property type="gene designation" value="Pp1alpha-96A"/>
</dbReference>
<dbReference type="VEuPathDB" id="VectorBase:FBgn0003134"/>
<dbReference type="eggNOG" id="KOG0374">
    <property type="taxonomic scope" value="Eukaryota"/>
</dbReference>
<dbReference type="GeneTree" id="ENSGT00940000164151"/>
<dbReference type="HOGENOM" id="CLU_004962_8_3_1"/>
<dbReference type="InParanoid" id="P48461"/>
<dbReference type="OMA" id="SIFICRG"/>
<dbReference type="OrthoDB" id="1930084at2759"/>
<dbReference type="PhylomeDB" id="P48461"/>
<dbReference type="Reactome" id="R-DME-2500257">
    <property type="pathway name" value="Resolution of Sister Chromatid Cohesion"/>
</dbReference>
<dbReference type="Reactome" id="R-DME-538898">
    <property type="pathway name" value="Dephosphorylation of TIM"/>
</dbReference>
<dbReference type="BioGRID-ORCS" id="42922">
    <property type="hits" value="0 hits in 3 CRISPR screens"/>
</dbReference>
<dbReference type="ChiTaRS" id="Pp1alpha-96A">
    <property type="organism name" value="fly"/>
</dbReference>
<dbReference type="GenomeRNAi" id="42922"/>
<dbReference type="PRO" id="PR:P48461"/>
<dbReference type="Proteomes" id="UP000000803">
    <property type="component" value="Chromosome 3R"/>
</dbReference>
<dbReference type="Bgee" id="FBgn0003134">
    <property type="expression patterns" value="Expressed in fat body cell in male reproductive gland and 280 other cell types or tissues"/>
</dbReference>
<dbReference type="ExpressionAtlas" id="P48461">
    <property type="expression patterns" value="baseline and differential"/>
</dbReference>
<dbReference type="GO" id="GO:0005737">
    <property type="term" value="C:cytoplasm"/>
    <property type="evidence" value="ECO:0007005"/>
    <property type="project" value="FlyBase"/>
</dbReference>
<dbReference type="GO" id="GO:0005829">
    <property type="term" value="C:cytosol"/>
    <property type="evidence" value="ECO:0000304"/>
    <property type="project" value="Reactome"/>
</dbReference>
<dbReference type="GO" id="GO:0005634">
    <property type="term" value="C:nucleus"/>
    <property type="evidence" value="ECO:0000318"/>
    <property type="project" value="GO_Central"/>
</dbReference>
<dbReference type="GO" id="GO:0000164">
    <property type="term" value="C:protein phosphatase type 1 complex"/>
    <property type="evidence" value="ECO:0000314"/>
    <property type="project" value="FlyBase"/>
</dbReference>
<dbReference type="GO" id="GO:0046872">
    <property type="term" value="F:metal ion binding"/>
    <property type="evidence" value="ECO:0007669"/>
    <property type="project" value="UniProtKB-KW"/>
</dbReference>
<dbReference type="GO" id="GO:0004722">
    <property type="term" value="F:protein serine/threonine phosphatase activity"/>
    <property type="evidence" value="ECO:0000255"/>
    <property type="project" value="FlyBase"/>
</dbReference>
<dbReference type="GO" id="GO:0050829">
    <property type="term" value="P:defense response to Gram-negative bacterium"/>
    <property type="evidence" value="ECO:0007001"/>
    <property type="project" value="FlyBase"/>
</dbReference>
<dbReference type="GO" id="GO:0030514">
    <property type="term" value="P:negative regulation of BMP signaling pathway"/>
    <property type="evidence" value="ECO:0000316"/>
    <property type="project" value="FlyBase"/>
</dbReference>
<dbReference type="GO" id="GO:0045879">
    <property type="term" value="P:negative regulation of smoothened signaling pathway"/>
    <property type="evidence" value="ECO:0000316"/>
    <property type="project" value="FlyBase"/>
</dbReference>
<dbReference type="GO" id="GO:0090263">
    <property type="term" value="P:positive regulation of canonical Wnt signaling pathway"/>
    <property type="evidence" value="ECO:0000316"/>
    <property type="project" value="FlyBase"/>
</dbReference>
<dbReference type="GO" id="GO:0045089">
    <property type="term" value="P:positive regulation of innate immune response"/>
    <property type="evidence" value="ECO:0007001"/>
    <property type="project" value="FlyBase"/>
</dbReference>
<dbReference type="GO" id="GO:0005979">
    <property type="term" value="P:regulation of glycogen biosynthetic process"/>
    <property type="evidence" value="ECO:0000250"/>
    <property type="project" value="FlyBase"/>
</dbReference>
<dbReference type="GO" id="GO:0005981">
    <property type="term" value="P:regulation of glycogen catabolic process"/>
    <property type="evidence" value="ECO:0000250"/>
    <property type="project" value="FlyBase"/>
</dbReference>
<dbReference type="CDD" id="cd07414">
    <property type="entry name" value="MPP_PP1_PPKL"/>
    <property type="match status" value="1"/>
</dbReference>
<dbReference type="FunFam" id="3.60.21.10:FF:000004">
    <property type="entry name" value="Serine/threonine-protein phosphatase"/>
    <property type="match status" value="1"/>
</dbReference>
<dbReference type="Gene3D" id="3.60.21.10">
    <property type="match status" value="1"/>
</dbReference>
<dbReference type="InterPro" id="IPR004843">
    <property type="entry name" value="Calcineurin-like_PHP_ApaH"/>
</dbReference>
<dbReference type="InterPro" id="IPR029052">
    <property type="entry name" value="Metallo-depent_PP-like"/>
</dbReference>
<dbReference type="InterPro" id="IPR050341">
    <property type="entry name" value="PP1_catalytic_subunit"/>
</dbReference>
<dbReference type="InterPro" id="IPR006186">
    <property type="entry name" value="Ser/Thr-sp_prot-phosphatase"/>
</dbReference>
<dbReference type="InterPro" id="IPR031675">
    <property type="entry name" value="STPPase_N"/>
</dbReference>
<dbReference type="PANTHER" id="PTHR11668">
    <property type="entry name" value="SERINE/THREONINE PROTEIN PHOSPHATASE"/>
    <property type="match status" value="1"/>
</dbReference>
<dbReference type="PANTHER" id="PTHR11668:SF300">
    <property type="entry name" value="SERINE_THREONINE-PROTEIN PHOSPHATASE"/>
    <property type="match status" value="1"/>
</dbReference>
<dbReference type="Pfam" id="PF00149">
    <property type="entry name" value="Metallophos"/>
    <property type="match status" value="1"/>
</dbReference>
<dbReference type="Pfam" id="PF16891">
    <property type="entry name" value="STPPase_N"/>
    <property type="match status" value="1"/>
</dbReference>
<dbReference type="PRINTS" id="PR00114">
    <property type="entry name" value="STPHPHTASE"/>
</dbReference>
<dbReference type="SMART" id="SM00156">
    <property type="entry name" value="PP2Ac"/>
    <property type="match status" value="1"/>
</dbReference>
<dbReference type="SUPFAM" id="SSF56300">
    <property type="entry name" value="Metallo-dependent phosphatases"/>
    <property type="match status" value="1"/>
</dbReference>
<dbReference type="PROSITE" id="PS00125">
    <property type="entry name" value="SER_THR_PHOSPHATASE"/>
    <property type="match status" value="1"/>
</dbReference>
<accession>P48461</accession>
<accession>Q5U0Y2</accession>
<accession>Q9VC69</accession>
<sequence length="327" mass="37370">MSDIMNIDSIISRLLEVRGARPGKNVQLSESEIRSLCLKSREIFLSQPILLELEAPLKICGDIHGQYYDLLRLFEYGGFPPESNYLFLGDYVDRGKQSLETICLLLAYKIKYAENFFLLRGNHECASINRIYGFYDECKRRYTIKLWKTFTDCFNCLPVAAIVDEKIFCCHGGLSPDLSSMEQIRRIMRPTDVPDQGLLCDLLWSDPDKDTMGWGENDRGVSFTFGAEVVGKFLQKHEFDLICRAHQVVEDGYEFFAKRQLVTLFSAPNYCGEFDNAGAMMSVDDTLMCSFQILKPADKRRFVYPNFGSSGRPLTPPRGANNKNKKK</sequence>
<keyword id="KW-0378">Hydrolase</keyword>
<keyword id="KW-0464">Manganese</keyword>
<keyword id="KW-0479">Metal-binding</keyword>
<keyword id="KW-0597">Phosphoprotein</keyword>
<keyword id="KW-0904">Protein phosphatase</keyword>
<keyword id="KW-1185">Reference proteome</keyword>
<feature type="chain" id="PRO_0000058791" description="Serine/threonine-protein phosphatase alpha-1 isoform">
    <location>
        <begin position="1"/>
        <end position="327"/>
    </location>
</feature>
<feature type="region of interest" description="Disordered" evidence="2">
    <location>
        <begin position="308"/>
        <end position="327"/>
    </location>
</feature>
<feature type="active site" description="Proton donor" evidence="1">
    <location>
        <position position="123"/>
    </location>
</feature>
<feature type="binding site" evidence="1">
    <location>
        <position position="62"/>
    </location>
    <ligand>
        <name>Mn(2+)</name>
        <dbReference type="ChEBI" id="CHEBI:29035"/>
        <label>1</label>
    </ligand>
</feature>
<feature type="binding site" evidence="1">
    <location>
        <position position="64"/>
    </location>
    <ligand>
        <name>Mn(2+)</name>
        <dbReference type="ChEBI" id="CHEBI:29035"/>
        <label>1</label>
    </ligand>
</feature>
<feature type="binding site" evidence="1">
    <location>
        <position position="90"/>
    </location>
    <ligand>
        <name>Mn(2+)</name>
        <dbReference type="ChEBI" id="CHEBI:29035"/>
        <label>1</label>
    </ligand>
</feature>
<feature type="binding site" evidence="1">
    <location>
        <position position="90"/>
    </location>
    <ligand>
        <name>Mn(2+)</name>
        <dbReference type="ChEBI" id="CHEBI:29035"/>
        <label>2</label>
    </ligand>
</feature>
<feature type="binding site" evidence="1">
    <location>
        <position position="122"/>
    </location>
    <ligand>
        <name>Mn(2+)</name>
        <dbReference type="ChEBI" id="CHEBI:29035"/>
        <label>2</label>
    </ligand>
</feature>
<feature type="binding site" evidence="1">
    <location>
        <position position="171"/>
    </location>
    <ligand>
        <name>Mn(2+)</name>
        <dbReference type="ChEBI" id="CHEBI:29035"/>
        <label>2</label>
    </ligand>
</feature>
<feature type="binding site" evidence="1">
    <location>
        <position position="246"/>
    </location>
    <ligand>
        <name>Mn(2+)</name>
        <dbReference type="ChEBI" id="CHEBI:29035"/>
        <label>2</label>
    </ligand>
</feature>
<feature type="modified residue" description="Phosphothreonine" evidence="4">
    <location>
        <position position="315"/>
    </location>
</feature>